<organism>
    <name type="scientific">Vibrio vulnificus (strain YJ016)</name>
    <dbReference type="NCBI Taxonomy" id="196600"/>
    <lineage>
        <taxon>Bacteria</taxon>
        <taxon>Pseudomonadati</taxon>
        <taxon>Pseudomonadota</taxon>
        <taxon>Gammaproteobacteria</taxon>
        <taxon>Vibrionales</taxon>
        <taxon>Vibrionaceae</taxon>
        <taxon>Vibrio</taxon>
    </lineage>
</organism>
<feature type="chain" id="PRO_0000150284" description="Cysteine desulfurase IscS">
    <location>
        <begin position="1"/>
        <end position="404"/>
    </location>
</feature>
<feature type="active site" description="Cysteine persulfide intermediate" evidence="1">
    <location>
        <position position="328"/>
    </location>
</feature>
<feature type="binding site" evidence="1">
    <location>
        <begin position="75"/>
        <end position="76"/>
    </location>
    <ligand>
        <name>pyridoxal 5'-phosphate</name>
        <dbReference type="ChEBI" id="CHEBI:597326"/>
    </ligand>
</feature>
<feature type="binding site" evidence="1">
    <location>
        <position position="155"/>
    </location>
    <ligand>
        <name>pyridoxal 5'-phosphate</name>
        <dbReference type="ChEBI" id="CHEBI:597326"/>
    </ligand>
</feature>
<feature type="binding site" evidence="1">
    <location>
        <position position="183"/>
    </location>
    <ligand>
        <name>pyridoxal 5'-phosphate</name>
        <dbReference type="ChEBI" id="CHEBI:597326"/>
    </ligand>
</feature>
<feature type="binding site" evidence="1">
    <location>
        <begin position="203"/>
        <end position="205"/>
    </location>
    <ligand>
        <name>pyridoxal 5'-phosphate</name>
        <dbReference type="ChEBI" id="CHEBI:597326"/>
    </ligand>
</feature>
<feature type="binding site" evidence="1">
    <location>
        <position position="243"/>
    </location>
    <ligand>
        <name>pyridoxal 5'-phosphate</name>
        <dbReference type="ChEBI" id="CHEBI:597326"/>
    </ligand>
</feature>
<feature type="binding site" description="via persulfide group" evidence="1">
    <location>
        <position position="328"/>
    </location>
    <ligand>
        <name>[2Fe-2S] cluster</name>
        <dbReference type="ChEBI" id="CHEBI:190135"/>
        <note>ligand shared with IscU</note>
    </ligand>
</feature>
<feature type="modified residue" description="N6-(pyridoxal phosphate)lysine" evidence="1">
    <location>
        <position position="206"/>
    </location>
</feature>
<protein>
    <recommendedName>
        <fullName evidence="1">Cysteine desulfurase IscS</fullName>
        <ecNumber evidence="1">2.8.1.7</ecNumber>
    </recommendedName>
</protein>
<gene>
    <name evidence="1" type="primary">iscS</name>
    <name type="ordered locus">VV0755</name>
</gene>
<evidence type="ECO:0000255" key="1">
    <source>
        <dbReference type="HAMAP-Rule" id="MF_00331"/>
    </source>
</evidence>
<proteinExistence type="inferred from homology"/>
<accession>Q7MNG2</accession>
<keyword id="KW-0001">2Fe-2S</keyword>
<keyword id="KW-0963">Cytoplasm</keyword>
<keyword id="KW-0408">Iron</keyword>
<keyword id="KW-0411">Iron-sulfur</keyword>
<keyword id="KW-0479">Metal-binding</keyword>
<keyword id="KW-0663">Pyridoxal phosphate</keyword>
<keyword id="KW-0808">Transferase</keyword>
<comment type="function">
    <text evidence="1">Master enzyme that delivers sulfur to a number of partners involved in Fe-S cluster assembly, tRNA modification or cofactor biosynthesis. Catalyzes the removal of elemental sulfur atoms from cysteine to produce alanine. Functions as a sulfur delivery protein for Fe-S cluster synthesis onto IscU, an Fe-S scaffold assembly protein, as well as other S acceptor proteins.</text>
</comment>
<comment type="catalytic activity">
    <reaction evidence="1">
        <text>(sulfur carrier)-H + L-cysteine = (sulfur carrier)-SH + L-alanine</text>
        <dbReference type="Rhea" id="RHEA:43892"/>
        <dbReference type="Rhea" id="RHEA-COMP:14737"/>
        <dbReference type="Rhea" id="RHEA-COMP:14739"/>
        <dbReference type="ChEBI" id="CHEBI:29917"/>
        <dbReference type="ChEBI" id="CHEBI:35235"/>
        <dbReference type="ChEBI" id="CHEBI:57972"/>
        <dbReference type="ChEBI" id="CHEBI:64428"/>
        <dbReference type="EC" id="2.8.1.7"/>
    </reaction>
</comment>
<comment type="cofactor">
    <cofactor evidence="1">
        <name>pyridoxal 5'-phosphate</name>
        <dbReference type="ChEBI" id="CHEBI:597326"/>
    </cofactor>
</comment>
<comment type="pathway">
    <text evidence="1">Cofactor biosynthesis; iron-sulfur cluster biosynthesis.</text>
</comment>
<comment type="subunit">
    <text evidence="1">Homodimer. Forms a heterotetramer with IscU, interacts with other sulfur acceptors.</text>
</comment>
<comment type="subcellular location">
    <subcellularLocation>
        <location evidence="1">Cytoplasm</location>
    </subcellularLocation>
</comment>
<comment type="similarity">
    <text evidence="1">Belongs to the class-V pyridoxal-phosphate-dependent aminotransferase family. NifS/IscS subfamily.</text>
</comment>
<sequence>MKLPIYLDYSATCPVDPRVAEKMVQYMTMDGTFGNPASRSHRYGWQAEEAVDTAREQIAELLNADPREIVFTSGATESDNLAIKGAAHFYSKQGKHVITSKTEHKAVLDTCRQLEREGFEVTYLEPESNGLISLSKLEAAMRDDTVLVSIMHVNNEIGVIQDIEAIGELCRSRKIIFHVDAAQSAGKVAIDVQKLKVDLISLSAHKIYGPKGIGALYVRRKPRIRLEAQMHGGGHERGFRSGTLPTHQIVGMGEAFRIAKLDMEKDYQHALALRNRLLDGVKDMEAVTINGDLDQRVPHNLNISFAFVEGESLLMSLKDLAVSSGSACTSASLEPSYVLRALGLNDELAHSSIRFSFGRFTTEEEIDYAIEQIRVAVAKLRDMSPLWDMYKEGIDLNTVEWAHH</sequence>
<name>ISCS_VIBVY</name>
<reference key="1">
    <citation type="journal article" date="2003" name="Genome Res.">
        <title>Comparative genome analysis of Vibrio vulnificus, a marine pathogen.</title>
        <authorList>
            <person name="Chen C.-Y."/>
            <person name="Wu K.-M."/>
            <person name="Chang Y.-C."/>
            <person name="Chang C.-H."/>
            <person name="Tsai H.-C."/>
            <person name="Liao T.-L."/>
            <person name="Liu Y.-M."/>
            <person name="Chen H.-J."/>
            <person name="Shen A.B.-T."/>
            <person name="Li J.-C."/>
            <person name="Su T.-L."/>
            <person name="Shao C.-P."/>
            <person name="Lee C.-T."/>
            <person name="Hor L.-I."/>
            <person name="Tsai S.-F."/>
        </authorList>
    </citation>
    <scope>NUCLEOTIDE SEQUENCE [LARGE SCALE GENOMIC DNA]</scope>
    <source>
        <strain>YJ016</strain>
    </source>
</reference>
<dbReference type="EC" id="2.8.1.7" evidence="1"/>
<dbReference type="EMBL" id="BA000037">
    <property type="protein sequence ID" value="BAC93519.1"/>
    <property type="molecule type" value="Genomic_DNA"/>
</dbReference>
<dbReference type="RefSeq" id="WP_011149600.1">
    <property type="nucleotide sequence ID" value="NC_005139.1"/>
</dbReference>
<dbReference type="SMR" id="Q7MNG2"/>
<dbReference type="STRING" id="672.VV93_v1c07010"/>
<dbReference type="KEGG" id="vvy:VV0755"/>
<dbReference type="PATRIC" id="fig|196600.6.peg.770"/>
<dbReference type="eggNOG" id="COG1104">
    <property type="taxonomic scope" value="Bacteria"/>
</dbReference>
<dbReference type="HOGENOM" id="CLU_003433_0_2_6"/>
<dbReference type="UniPathway" id="UPA00266"/>
<dbReference type="Proteomes" id="UP000002675">
    <property type="component" value="Chromosome I"/>
</dbReference>
<dbReference type="GO" id="GO:1990221">
    <property type="term" value="C:L-cysteine desulfurase complex"/>
    <property type="evidence" value="ECO:0007669"/>
    <property type="project" value="UniProtKB-ARBA"/>
</dbReference>
<dbReference type="GO" id="GO:0051537">
    <property type="term" value="F:2 iron, 2 sulfur cluster binding"/>
    <property type="evidence" value="ECO:0007669"/>
    <property type="project" value="UniProtKB-UniRule"/>
</dbReference>
<dbReference type="GO" id="GO:0031071">
    <property type="term" value="F:cysteine desulfurase activity"/>
    <property type="evidence" value="ECO:0007669"/>
    <property type="project" value="UniProtKB-UniRule"/>
</dbReference>
<dbReference type="GO" id="GO:0046872">
    <property type="term" value="F:metal ion binding"/>
    <property type="evidence" value="ECO:0007669"/>
    <property type="project" value="UniProtKB-KW"/>
</dbReference>
<dbReference type="GO" id="GO:0030170">
    <property type="term" value="F:pyridoxal phosphate binding"/>
    <property type="evidence" value="ECO:0007669"/>
    <property type="project" value="UniProtKB-UniRule"/>
</dbReference>
<dbReference type="GO" id="GO:0044571">
    <property type="term" value="P:[2Fe-2S] cluster assembly"/>
    <property type="evidence" value="ECO:0007669"/>
    <property type="project" value="UniProtKB-UniRule"/>
</dbReference>
<dbReference type="FunFam" id="3.40.640.10:FF:000003">
    <property type="entry name" value="Cysteine desulfurase IscS"/>
    <property type="match status" value="1"/>
</dbReference>
<dbReference type="FunFam" id="3.90.1150.10:FF:000002">
    <property type="entry name" value="Cysteine desulfurase IscS"/>
    <property type="match status" value="1"/>
</dbReference>
<dbReference type="Gene3D" id="3.90.1150.10">
    <property type="entry name" value="Aspartate Aminotransferase, domain 1"/>
    <property type="match status" value="1"/>
</dbReference>
<dbReference type="Gene3D" id="3.40.640.10">
    <property type="entry name" value="Type I PLP-dependent aspartate aminotransferase-like (Major domain)"/>
    <property type="match status" value="1"/>
</dbReference>
<dbReference type="HAMAP" id="MF_00331">
    <property type="entry name" value="Cys_desulf_IscS"/>
    <property type="match status" value="1"/>
</dbReference>
<dbReference type="InterPro" id="IPR000192">
    <property type="entry name" value="Aminotrans_V_dom"/>
</dbReference>
<dbReference type="InterPro" id="IPR020578">
    <property type="entry name" value="Aminotrans_V_PyrdxlP_BS"/>
</dbReference>
<dbReference type="InterPro" id="IPR010240">
    <property type="entry name" value="Cys_deSase_IscS"/>
</dbReference>
<dbReference type="InterPro" id="IPR016454">
    <property type="entry name" value="Cysteine_dSase"/>
</dbReference>
<dbReference type="InterPro" id="IPR015424">
    <property type="entry name" value="PyrdxlP-dep_Trfase"/>
</dbReference>
<dbReference type="InterPro" id="IPR015421">
    <property type="entry name" value="PyrdxlP-dep_Trfase_major"/>
</dbReference>
<dbReference type="InterPro" id="IPR015422">
    <property type="entry name" value="PyrdxlP-dep_Trfase_small"/>
</dbReference>
<dbReference type="NCBIfam" id="TIGR02006">
    <property type="entry name" value="IscS"/>
    <property type="match status" value="1"/>
</dbReference>
<dbReference type="NCBIfam" id="NF002806">
    <property type="entry name" value="PRK02948.1"/>
    <property type="match status" value="1"/>
</dbReference>
<dbReference type="NCBIfam" id="NF010611">
    <property type="entry name" value="PRK14012.1"/>
    <property type="match status" value="1"/>
</dbReference>
<dbReference type="PANTHER" id="PTHR11601:SF34">
    <property type="entry name" value="CYSTEINE DESULFURASE"/>
    <property type="match status" value="1"/>
</dbReference>
<dbReference type="PANTHER" id="PTHR11601">
    <property type="entry name" value="CYSTEINE DESULFURYLASE FAMILY MEMBER"/>
    <property type="match status" value="1"/>
</dbReference>
<dbReference type="Pfam" id="PF00266">
    <property type="entry name" value="Aminotran_5"/>
    <property type="match status" value="1"/>
</dbReference>
<dbReference type="PIRSF" id="PIRSF005572">
    <property type="entry name" value="NifS"/>
    <property type="match status" value="1"/>
</dbReference>
<dbReference type="SUPFAM" id="SSF53383">
    <property type="entry name" value="PLP-dependent transferases"/>
    <property type="match status" value="1"/>
</dbReference>
<dbReference type="PROSITE" id="PS00595">
    <property type="entry name" value="AA_TRANSFER_CLASS_5"/>
    <property type="match status" value="1"/>
</dbReference>